<sequence length="234" mass="27932">MAIPLLYYPYSSQNHRVNSFEIKGNDEQPRIFSTDSLPTSSEMDEIIWAAYRQIFSEHQILKFNRDTYLESQLRFNQITVREFIRGLLLSERFRILNYDVNNNYRFSEMCVQRVLGRDIYNDKEKIAWSIVLCTRGIKAFVDSLVNSKEYEENFGDNTVPYQKRRVIFQRSKGEVPFNLKTPRYGSDFKERLGMPQYAWQGAIRTFRPQEIKPRPGDPVLYLDMSRELLFSRFR</sequence>
<comment type="function">
    <text evidence="1">Rod-core linker protein required for attachment of phycocyanin to allophycocyanin in cores of phycobilisomes.</text>
</comment>
<comment type="function">
    <text evidence="1">Linker polypeptides determine the state of aggregation and the location of the disk-shaped phycobiliprotein units within the phycobilisome and modulate their spectroscopic properties in order to mediate a directed and optimal energy transfer.</text>
</comment>
<comment type="subunit">
    <text evidence="1">The phycobilisome is a hemidiscoidal structure that is composed of two distinct substructures: a core complex and a number of rods radiating from the core.</text>
</comment>
<comment type="subcellular location">
    <subcellularLocation>
        <location evidence="1">Plastid</location>
        <location evidence="1">Chloroplast thylakoid membrane</location>
        <topology evidence="1">Peripheral membrane protein</topology>
        <orientation evidence="1">Stromal side</orientation>
    </subcellularLocation>
</comment>
<comment type="similarity">
    <text evidence="2">Belongs to the phycobilisome linker protein family.</text>
</comment>
<keyword id="KW-0042">Antenna complex</keyword>
<keyword id="KW-0150">Chloroplast</keyword>
<keyword id="KW-0472">Membrane</keyword>
<keyword id="KW-0602">Photosynthesis</keyword>
<keyword id="KW-0605">Phycobilisome</keyword>
<keyword id="KW-0934">Plastid</keyword>
<keyword id="KW-0793">Thylakoid</keyword>
<feature type="chain" id="PRO_0000199248" description="Phycobilisome rod-core linker polypeptide cpcG">
    <location>
        <begin position="1"/>
        <end position="234"/>
    </location>
</feature>
<feature type="domain" description="PBS-linker" evidence="2">
    <location>
        <begin position="11"/>
        <end position="191"/>
    </location>
</feature>
<proteinExistence type="inferred from homology"/>
<dbReference type="EMBL" id="AF022186">
    <property type="protein sequence ID" value="AAB82690.1"/>
    <property type="molecule type" value="Genomic_DNA"/>
</dbReference>
<dbReference type="PIR" id="T11967">
    <property type="entry name" value="T11967"/>
</dbReference>
<dbReference type="RefSeq" id="NP_045071.1">
    <property type="nucleotide sequence ID" value="NC_001840.1"/>
</dbReference>
<dbReference type="SMR" id="O19899"/>
<dbReference type="GeneID" id="800296"/>
<dbReference type="GO" id="GO:0009535">
    <property type="term" value="C:chloroplast thylakoid membrane"/>
    <property type="evidence" value="ECO:0007669"/>
    <property type="project" value="UniProtKB-SubCell"/>
</dbReference>
<dbReference type="GO" id="GO:0030089">
    <property type="term" value="C:phycobilisome"/>
    <property type="evidence" value="ECO:0007669"/>
    <property type="project" value="UniProtKB-KW"/>
</dbReference>
<dbReference type="GO" id="GO:0015979">
    <property type="term" value="P:photosynthesis"/>
    <property type="evidence" value="ECO:0007669"/>
    <property type="project" value="UniProtKB-KW"/>
</dbReference>
<dbReference type="Gene3D" id="1.10.3130.20">
    <property type="entry name" value="Phycobilisome linker domain"/>
    <property type="match status" value="1"/>
</dbReference>
<dbReference type="InterPro" id="IPR001297">
    <property type="entry name" value="PBS_linker_dom"/>
</dbReference>
<dbReference type="InterPro" id="IPR038255">
    <property type="entry name" value="PBS_linker_sf"/>
</dbReference>
<dbReference type="InterPro" id="IPR016470">
    <property type="entry name" value="Phycobilisome"/>
</dbReference>
<dbReference type="PANTHER" id="PTHR34011">
    <property type="entry name" value="PHYCOBILISOME 32.1 KDA LINKER POLYPEPTIDE, PHYCOCYANIN-ASSOCIATED, ROD 2-RELATED"/>
    <property type="match status" value="1"/>
</dbReference>
<dbReference type="Pfam" id="PF00427">
    <property type="entry name" value="PBS_linker_poly"/>
    <property type="match status" value="1"/>
</dbReference>
<dbReference type="PIRSF" id="PIRSF005898">
    <property type="entry name" value="Phycobilisome_CpeC/CpcI"/>
    <property type="match status" value="1"/>
</dbReference>
<dbReference type="PROSITE" id="PS51445">
    <property type="entry name" value="PBS_LINKER"/>
    <property type="match status" value="1"/>
</dbReference>
<organism>
    <name type="scientific">Cyanidium caldarium</name>
    <name type="common">Red alga</name>
    <dbReference type="NCBI Taxonomy" id="2771"/>
    <lineage>
        <taxon>Eukaryota</taxon>
        <taxon>Rhodophyta</taxon>
        <taxon>Bangiophyceae</taxon>
        <taxon>Cyanidiales</taxon>
        <taxon>Cyanidiaceae</taxon>
        <taxon>Cyanidium</taxon>
    </lineage>
</organism>
<evidence type="ECO:0000250" key="1"/>
<evidence type="ECO:0000255" key="2">
    <source>
        <dbReference type="PROSITE-ProRule" id="PRU00775"/>
    </source>
</evidence>
<gene>
    <name type="primary">cpcG</name>
</gene>
<reference key="1">
    <citation type="journal article" date="2000" name="J. Mol. Evol.">
        <title>The structure and gene repertoire of an ancient red algal plastid genome.</title>
        <authorList>
            <person name="Gloeckner G."/>
            <person name="Rosenthal A."/>
            <person name="Valentin K.-U."/>
        </authorList>
    </citation>
    <scope>NUCLEOTIDE SEQUENCE [LARGE SCALE GENOMIC DNA]</scope>
    <source>
        <strain>RK-1</strain>
    </source>
</reference>
<geneLocation type="chloroplast"/>
<protein>
    <recommendedName>
        <fullName>Phycobilisome rod-core linker polypeptide cpcG</fullName>
    </recommendedName>
</protein>
<name>PYG_CYACA</name>
<accession>O19899</accession>